<feature type="chain" id="PRO_0000381896" description="Polyribonucleotide nucleotidyltransferase">
    <location>
        <begin position="1"/>
        <end position="693"/>
    </location>
</feature>
<feature type="domain" description="KH" evidence="1">
    <location>
        <begin position="556"/>
        <end position="615"/>
    </location>
</feature>
<feature type="domain" description="S1 motif" evidence="1">
    <location>
        <begin position="625"/>
        <end position="693"/>
    </location>
</feature>
<feature type="binding site" evidence="1">
    <location>
        <position position="489"/>
    </location>
    <ligand>
        <name>Mg(2+)</name>
        <dbReference type="ChEBI" id="CHEBI:18420"/>
    </ligand>
</feature>
<feature type="binding site" evidence="1">
    <location>
        <position position="495"/>
    </location>
    <ligand>
        <name>Mg(2+)</name>
        <dbReference type="ChEBI" id="CHEBI:18420"/>
    </ligand>
</feature>
<organism>
    <name type="scientific">Francisella tularensis subsp. mediasiatica (strain FSC147)</name>
    <dbReference type="NCBI Taxonomy" id="441952"/>
    <lineage>
        <taxon>Bacteria</taxon>
        <taxon>Pseudomonadati</taxon>
        <taxon>Pseudomonadota</taxon>
        <taxon>Gammaproteobacteria</taxon>
        <taxon>Thiotrichales</taxon>
        <taxon>Francisellaceae</taxon>
        <taxon>Francisella</taxon>
    </lineage>
</organism>
<dbReference type="EC" id="2.7.7.8" evidence="1"/>
<dbReference type="EMBL" id="CP000915">
    <property type="protein sequence ID" value="ACD31221.1"/>
    <property type="molecule type" value="Genomic_DNA"/>
</dbReference>
<dbReference type="SMR" id="B2SDK7"/>
<dbReference type="KEGG" id="ftm:FTM_1385"/>
<dbReference type="HOGENOM" id="CLU_004217_2_2_6"/>
<dbReference type="GO" id="GO:0005829">
    <property type="term" value="C:cytosol"/>
    <property type="evidence" value="ECO:0007669"/>
    <property type="project" value="TreeGrafter"/>
</dbReference>
<dbReference type="GO" id="GO:0000175">
    <property type="term" value="F:3'-5'-RNA exonuclease activity"/>
    <property type="evidence" value="ECO:0007669"/>
    <property type="project" value="TreeGrafter"/>
</dbReference>
<dbReference type="GO" id="GO:0000287">
    <property type="term" value="F:magnesium ion binding"/>
    <property type="evidence" value="ECO:0007669"/>
    <property type="project" value="UniProtKB-UniRule"/>
</dbReference>
<dbReference type="GO" id="GO:0004654">
    <property type="term" value="F:polyribonucleotide nucleotidyltransferase activity"/>
    <property type="evidence" value="ECO:0007669"/>
    <property type="project" value="UniProtKB-UniRule"/>
</dbReference>
<dbReference type="GO" id="GO:0003723">
    <property type="term" value="F:RNA binding"/>
    <property type="evidence" value="ECO:0007669"/>
    <property type="project" value="UniProtKB-UniRule"/>
</dbReference>
<dbReference type="GO" id="GO:0006402">
    <property type="term" value="P:mRNA catabolic process"/>
    <property type="evidence" value="ECO:0007669"/>
    <property type="project" value="UniProtKB-UniRule"/>
</dbReference>
<dbReference type="GO" id="GO:0006396">
    <property type="term" value="P:RNA processing"/>
    <property type="evidence" value="ECO:0007669"/>
    <property type="project" value="InterPro"/>
</dbReference>
<dbReference type="CDD" id="cd02393">
    <property type="entry name" value="KH-I_PNPase"/>
    <property type="match status" value="1"/>
</dbReference>
<dbReference type="CDD" id="cd11363">
    <property type="entry name" value="RNase_PH_PNPase_1"/>
    <property type="match status" value="1"/>
</dbReference>
<dbReference type="CDD" id="cd11364">
    <property type="entry name" value="RNase_PH_PNPase_2"/>
    <property type="match status" value="1"/>
</dbReference>
<dbReference type="FunFam" id="3.30.1370.10:FF:000001">
    <property type="entry name" value="Polyribonucleotide nucleotidyltransferase"/>
    <property type="match status" value="1"/>
</dbReference>
<dbReference type="FunFam" id="3.30.230.70:FF:000001">
    <property type="entry name" value="Polyribonucleotide nucleotidyltransferase"/>
    <property type="match status" value="1"/>
</dbReference>
<dbReference type="FunFam" id="3.30.230.70:FF:000002">
    <property type="entry name" value="Polyribonucleotide nucleotidyltransferase"/>
    <property type="match status" value="1"/>
</dbReference>
<dbReference type="Gene3D" id="3.30.230.70">
    <property type="entry name" value="GHMP Kinase, N-terminal domain"/>
    <property type="match status" value="2"/>
</dbReference>
<dbReference type="Gene3D" id="3.30.1370.10">
    <property type="entry name" value="K Homology domain, type 1"/>
    <property type="match status" value="1"/>
</dbReference>
<dbReference type="Gene3D" id="2.40.50.140">
    <property type="entry name" value="Nucleic acid-binding proteins"/>
    <property type="match status" value="1"/>
</dbReference>
<dbReference type="HAMAP" id="MF_01595">
    <property type="entry name" value="PNPase"/>
    <property type="match status" value="1"/>
</dbReference>
<dbReference type="InterPro" id="IPR001247">
    <property type="entry name" value="ExoRNase_PH_dom1"/>
</dbReference>
<dbReference type="InterPro" id="IPR015847">
    <property type="entry name" value="ExoRNase_PH_dom2"/>
</dbReference>
<dbReference type="InterPro" id="IPR036345">
    <property type="entry name" value="ExoRNase_PH_dom2_sf"/>
</dbReference>
<dbReference type="InterPro" id="IPR004087">
    <property type="entry name" value="KH_dom"/>
</dbReference>
<dbReference type="InterPro" id="IPR004088">
    <property type="entry name" value="KH_dom_type_1"/>
</dbReference>
<dbReference type="InterPro" id="IPR036612">
    <property type="entry name" value="KH_dom_type_1_sf"/>
</dbReference>
<dbReference type="InterPro" id="IPR012340">
    <property type="entry name" value="NA-bd_OB-fold"/>
</dbReference>
<dbReference type="InterPro" id="IPR012162">
    <property type="entry name" value="PNPase"/>
</dbReference>
<dbReference type="InterPro" id="IPR027408">
    <property type="entry name" value="PNPase/RNase_PH_dom_sf"/>
</dbReference>
<dbReference type="InterPro" id="IPR015848">
    <property type="entry name" value="PNPase_PH_RNA-bd_bac/org-type"/>
</dbReference>
<dbReference type="InterPro" id="IPR036456">
    <property type="entry name" value="PNPase_PH_RNA-bd_sf"/>
</dbReference>
<dbReference type="InterPro" id="IPR020568">
    <property type="entry name" value="Ribosomal_Su5_D2-typ_SF"/>
</dbReference>
<dbReference type="InterPro" id="IPR003029">
    <property type="entry name" value="S1_domain"/>
</dbReference>
<dbReference type="NCBIfam" id="TIGR03591">
    <property type="entry name" value="polynuc_phos"/>
    <property type="match status" value="1"/>
</dbReference>
<dbReference type="NCBIfam" id="NF008805">
    <property type="entry name" value="PRK11824.1"/>
    <property type="match status" value="1"/>
</dbReference>
<dbReference type="PANTHER" id="PTHR11252">
    <property type="entry name" value="POLYRIBONUCLEOTIDE NUCLEOTIDYLTRANSFERASE"/>
    <property type="match status" value="1"/>
</dbReference>
<dbReference type="PANTHER" id="PTHR11252:SF0">
    <property type="entry name" value="POLYRIBONUCLEOTIDE NUCLEOTIDYLTRANSFERASE 1, MITOCHONDRIAL"/>
    <property type="match status" value="1"/>
</dbReference>
<dbReference type="Pfam" id="PF00013">
    <property type="entry name" value="KH_1"/>
    <property type="match status" value="1"/>
</dbReference>
<dbReference type="Pfam" id="PF03726">
    <property type="entry name" value="PNPase"/>
    <property type="match status" value="1"/>
</dbReference>
<dbReference type="Pfam" id="PF01138">
    <property type="entry name" value="RNase_PH"/>
    <property type="match status" value="2"/>
</dbReference>
<dbReference type="Pfam" id="PF03725">
    <property type="entry name" value="RNase_PH_C"/>
    <property type="match status" value="2"/>
</dbReference>
<dbReference type="Pfam" id="PF00575">
    <property type="entry name" value="S1"/>
    <property type="match status" value="1"/>
</dbReference>
<dbReference type="PIRSF" id="PIRSF005499">
    <property type="entry name" value="PNPase"/>
    <property type="match status" value="1"/>
</dbReference>
<dbReference type="SMART" id="SM00322">
    <property type="entry name" value="KH"/>
    <property type="match status" value="1"/>
</dbReference>
<dbReference type="SMART" id="SM00316">
    <property type="entry name" value="S1"/>
    <property type="match status" value="1"/>
</dbReference>
<dbReference type="SUPFAM" id="SSF54791">
    <property type="entry name" value="Eukaryotic type KH-domain (KH-domain type I)"/>
    <property type="match status" value="1"/>
</dbReference>
<dbReference type="SUPFAM" id="SSF50249">
    <property type="entry name" value="Nucleic acid-binding proteins"/>
    <property type="match status" value="1"/>
</dbReference>
<dbReference type="SUPFAM" id="SSF46915">
    <property type="entry name" value="Polynucleotide phosphorylase/guanosine pentaphosphate synthase (PNPase/GPSI), domain 3"/>
    <property type="match status" value="1"/>
</dbReference>
<dbReference type="SUPFAM" id="SSF55666">
    <property type="entry name" value="Ribonuclease PH domain 2-like"/>
    <property type="match status" value="2"/>
</dbReference>
<dbReference type="SUPFAM" id="SSF54211">
    <property type="entry name" value="Ribosomal protein S5 domain 2-like"/>
    <property type="match status" value="2"/>
</dbReference>
<dbReference type="PROSITE" id="PS50084">
    <property type="entry name" value="KH_TYPE_1"/>
    <property type="match status" value="1"/>
</dbReference>
<dbReference type="PROSITE" id="PS50126">
    <property type="entry name" value="S1"/>
    <property type="match status" value="1"/>
</dbReference>
<proteinExistence type="inferred from homology"/>
<evidence type="ECO:0000255" key="1">
    <source>
        <dbReference type="HAMAP-Rule" id="MF_01595"/>
    </source>
</evidence>
<gene>
    <name evidence="1" type="primary">pnp</name>
    <name type="ordered locus">FTM_1385</name>
</gene>
<name>PNP_FRATM</name>
<protein>
    <recommendedName>
        <fullName evidence="1">Polyribonucleotide nucleotidyltransferase</fullName>
        <ecNumber evidence="1">2.7.7.8</ecNumber>
    </recommendedName>
    <alternativeName>
        <fullName evidence="1">Polynucleotide phosphorylase</fullName>
        <shortName evidence="1">PNPase</shortName>
    </alternativeName>
</protein>
<sequence>MKIFREVFELGNKEIILETGGMARQADGSVTVSCGNNIVLVTTVVKKSVADGTDFFPLSVHYLEKTYAAGKIPGGFLRREGRPSEEQILISRLIDRSIRPSFPDGFFNEIQIVATVLSYDGAFSPDILALIGASASLAISGAPYDDVVAGVRVGYTNGKYILNPNKQDLRDSDLDLVVSGTDDAILMVESEANSLPESVMLGGILYAHKHLKTIINSINRLAKVASKPRMEYSIYQINKFLKSQIKSQFFGEIKNAYTIASKQERNLKLNAIRKNVLEYIFSSDVDGNEYTEKEILEAFHDIEKDLVRSNILEGKPRIDGRCTETIRPINVKIGVLPGVHGSALFTRGETQALVVTTLGSDRDAQLVESLDGIEKCRYMLHYNFPPYSVGECGMVGMAPKRREIGHANLAKRATQAVFPNEEAYPYVVRVVSEILESNGSSSMATVCGSSLSMMDAGVPIAEPVAGIAMGLIKDGAKYAVLSDILGDEDHLGDMDFKVAGTRYGVTALQMDIKIKGISREILEQALEQARVGRLHILGIMNEVIKEHKEAVSDVAPQIHVMNINPAKIKDVVGRGGATVKGIVEKTGAQIDTSDSGEVKVFAKDKKSMDMAVAMIEEIVAEVEEGQVYKGKIVKLLDSGVFVNLLGSQDGYLPFSEIEQAGMKTNSLVEGQGLEVLVQNIDRGGRVKLSLVAR</sequence>
<keyword id="KW-0963">Cytoplasm</keyword>
<keyword id="KW-0460">Magnesium</keyword>
<keyword id="KW-0479">Metal-binding</keyword>
<keyword id="KW-0548">Nucleotidyltransferase</keyword>
<keyword id="KW-0694">RNA-binding</keyword>
<keyword id="KW-0808">Transferase</keyword>
<comment type="function">
    <text evidence="1">Involved in mRNA degradation. Catalyzes the phosphorolysis of single-stranded polyribonucleotides processively in the 3'- to 5'-direction.</text>
</comment>
<comment type="catalytic activity">
    <reaction evidence="1">
        <text>RNA(n+1) + phosphate = RNA(n) + a ribonucleoside 5'-diphosphate</text>
        <dbReference type="Rhea" id="RHEA:22096"/>
        <dbReference type="Rhea" id="RHEA-COMP:14527"/>
        <dbReference type="Rhea" id="RHEA-COMP:17342"/>
        <dbReference type="ChEBI" id="CHEBI:43474"/>
        <dbReference type="ChEBI" id="CHEBI:57930"/>
        <dbReference type="ChEBI" id="CHEBI:140395"/>
        <dbReference type="EC" id="2.7.7.8"/>
    </reaction>
</comment>
<comment type="cofactor">
    <cofactor evidence="1">
        <name>Mg(2+)</name>
        <dbReference type="ChEBI" id="CHEBI:18420"/>
    </cofactor>
</comment>
<comment type="subunit">
    <text evidence="1">Component of the RNA degradosome, which is a multiprotein complex involved in RNA processing and mRNA degradation.</text>
</comment>
<comment type="subcellular location">
    <subcellularLocation>
        <location evidence="1">Cytoplasm</location>
    </subcellularLocation>
</comment>
<comment type="similarity">
    <text evidence="1">Belongs to the polyribonucleotide nucleotidyltransferase family.</text>
</comment>
<reference key="1">
    <citation type="journal article" date="2009" name="PLoS Pathog.">
        <title>Molecular evolutionary consequences of niche restriction in Francisella tularensis, a facultative intracellular pathogen.</title>
        <authorList>
            <person name="Larsson P."/>
            <person name="Elfsmark D."/>
            <person name="Svensson K."/>
            <person name="Wikstroem P."/>
            <person name="Forsman M."/>
            <person name="Brettin T."/>
            <person name="Keim P."/>
            <person name="Johansson A."/>
        </authorList>
    </citation>
    <scope>NUCLEOTIDE SEQUENCE [LARGE SCALE GENOMIC DNA]</scope>
    <source>
        <strain>FSC147</strain>
    </source>
</reference>
<accession>B2SDK7</accession>